<gene>
    <name evidence="1" type="primary">rpsF</name>
    <name type="ordered locus">Plav_3361</name>
</gene>
<name>RS6_PARL1</name>
<dbReference type="EMBL" id="CP000774">
    <property type="protein sequence ID" value="ABS64965.1"/>
    <property type="molecule type" value="Genomic_DNA"/>
</dbReference>
<dbReference type="RefSeq" id="WP_012112296.1">
    <property type="nucleotide sequence ID" value="NC_009719.1"/>
</dbReference>
<dbReference type="SMR" id="A7HYI2"/>
<dbReference type="STRING" id="402881.Plav_3361"/>
<dbReference type="KEGG" id="pla:Plav_3361"/>
<dbReference type="eggNOG" id="COG0360">
    <property type="taxonomic scope" value="Bacteria"/>
</dbReference>
<dbReference type="HOGENOM" id="CLU_113441_2_0_5"/>
<dbReference type="OrthoDB" id="9812702at2"/>
<dbReference type="Proteomes" id="UP000006377">
    <property type="component" value="Chromosome"/>
</dbReference>
<dbReference type="GO" id="GO:0022627">
    <property type="term" value="C:cytosolic small ribosomal subunit"/>
    <property type="evidence" value="ECO:0007669"/>
    <property type="project" value="TreeGrafter"/>
</dbReference>
<dbReference type="GO" id="GO:0070181">
    <property type="term" value="F:small ribosomal subunit rRNA binding"/>
    <property type="evidence" value="ECO:0007669"/>
    <property type="project" value="TreeGrafter"/>
</dbReference>
<dbReference type="GO" id="GO:0003735">
    <property type="term" value="F:structural constituent of ribosome"/>
    <property type="evidence" value="ECO:0007669"/>
    <property type="project" value="InterPro"/>
</dbReference>
<dbReference type="GO" id="GO:0006412">
    <property type="term" value="P:translation"/>
    <property type="evidence" value="ECO:0007669"/>
    <property type="project" value="UniProtKB-UniRule"/>
</dbReference>
<dbReference type="CDD" id="cd00473">
    <property type="entry name" value="bS6"/>
    <property type="match status" value="1"/>
</dbReference>
<dbReference type="Gene3D" id="3.30.70.60">
    <property type="match status" value="1"/>
</dbReference>
<dbReference type="HAMAP" id="MF_00360">
    <property type="entry name" value="Ribosomal_bS6"/>
    <property type="match status" value="1"/>
</dbReference>
<dbReference type="InterPro" id="IPR000529">
    <property type="entry name" value="Ribosomal_bS6"/>
</dbReference>
<dbReference type="InterPro" id="IPR035980">
    <property type="entry name" value="Ribosomal_bS6_sf"/>
</dbReference>
<dbReference type="InterPro" id="IPR020814">
    <property type="entry name" value="Ribosomal_S6_plastid/chlpt"/>
</dbReference>
<dbReference type="InterPro" id="IPR014717">
    <property type="entry name" value="Transl_elong_EF1B/ribsomal_bS6"/>
</dbReference>
<dbReference type="NCBIfam" id="TIGR00166">
    <property type="entry name" value="S6"/>
    <property type="match status" value="1"/>
</dbReference>
<dbReference type="PANTHER" id="PTHR21011">
    <property type="entry name" value="MITOCHONDRIAL 28S RIBOSOMAL PROTEIN S6"/>
    <property type="match status" value="1"/>
</dbReference>
<dbReference type="PANTHER" id="PTHR21011:SF1">
    <property type="entry name" value="SMALL RIBOSOMAL SUBUNIT PROTEIN BS6M"/>
    <property type="match status" value="1"/>
</dbReference>
<dbReference type="Pfam" id="PF01250">
    <property type="entry name" value="Ribosomal_S6"/>
    <property type="match status" value="1"/>
</dbReference>
<dbReference type="SUPFAM" id="SSF54995">
    <property type="entry name" value="Ribosomal protein S6"/>
    <property type="match status" value="1"/>
</dbReference>
<protein>
    <recommendedName>
        <fullName evidence="1">Small ribosomal subunit protein bS6</fullName>
    </recommendedName>
    <alternativeName>
        <fullName evidence="3">30S ribosomal protein S6</fullName>
    </alternativeName>
</protein>
<evidence type="ECO:0000255" key="1">
    <source>
        <dbReference type="HAMAP-Rule" id="MF_00360"/>
    </source>
</evidence>
<evidence type="ECO:0000256" key="2">
    <source>
        <dbReference type="SAM" id="MobiDB-lite"/>
    </source>
</evidence>
<evidence type="ECO:0000305" key="3"/>
<keyword id="KW-1185">Reference proteome</keyword>
<keyword id="KW-0687">Ribonucleoprotein</keyword>
<keyword id="KW-0689">Ribosomal protein</keyword>
<keyword id="KW-0694">RNA-binding</keyword>
<keyword id="KW-0699">rRNA-binding</keyword>
<proteinExistence type="inferred from homology"/>
<accession>A7HYI2</accession>
<feature type="chain" id="PRO_1000079455" description="Small ribosomal subunit protein bS6">
    <location>
        <begin position="1"/>
        <end position="155"/>
    </location>
</feature>
<feature type="region of interest" description="Disordered" evidence="2">
    <location>
        <begin position="94"/>
        <end position="155"/>
    </location>
</feature>
<feature type="compositionally biased region" description="Basic and acidic residues" evidence="2">
    <location>
        <begin position="107"/>
        <end position="149"/>
    </location>
</feature>
<comment type="function">
    <text evidence="1">Binds together with bS18 to 16S ribosomal RNA.</text>
</comment>
<comment type="similarity">
    <text evidence="1">Belongs to the bacterial ribosomal protein bS6 family.</text>
</comment>
<organism>
    <name type="scientific">Parvibaculum lavamentivorans (strain DS-1 / DSM 13023 / NCIMB 13966)</name>
    <dbReference type="NCBI Taxonomy" id="402881"/>
    <lineage>
        <taxon>Bacteria</taxon>
        <taxon>Pseudomonadati</taxon>
        <taxon>Pseudomonadota</taxon>
        <taxon>Alphaproteobacteria</taxon>
        <taxon>Hyphomicrobiales</taxon>
        <taxon>Parvibaculaceae</taxon>
        <taxon>Parvibaculum</taxon>
    </lineage>
</organism>
<sequence length="155" mass="17740">MALYEHIFIARQDVSQQQVEALTEQFSNIIKEQGGQVGKTEYWGLRNLAFKVKKNRKGHYTLVNIDAPHAAVAEMERQMGISEDVLRFITVRVEEHETEPSAMMQSRGDRGDRGDRRGGDRFGDRDRGDRGDRGSSRFGDRERPRRDDNSDGGQE</sequence>
<reference key="1">
    <citation type="journal article" date="2011" name="Stand. Genomic Sci.">
        <title>Complete genome sequence of Parvibaculum lavamentivorans type strain (DS-1(T)).</title>
        <authorList>
            <person name="Schleheck D."/>
            <person name="Weiss M."/>
            <person name="Pitluck S."/>
            <person name="Bruce D."/>
            <person name="Land M.L."/>
            <person name="Han S."/>
            <person name="Saunders E."/>
            <person name="Tapia R."/>
            <person name="Detter C."/>
            <person name="Brettin T."/>
            <person name="Han J."/>
            <person name="Woyke T."/>
            <person name="Goodwin L."/>
            <person name="Pennacchio L."/>
            <person name="Nolan M."/>
            <person name="Cook A.M."/>
            <person name="Kjelleberg S."/>
            <person name="Thomas T."/>
        </authorList>
    </citation>
    <scope>NUCLEOTIDE SEQUENCE [LARGE SCALE GENOMIC DNA]</scope>
    <source>
        <strain>DS-1 / DSM 13023 / NCIMB 13966</strain>
    </source>
</reference>